<protein>
    <recommendedName>
        <fullName evidence="1">Flap endonuclease Xni</fullName>
        <shortName evidence="1">FEN</shortName>
        <ecNumber evidence="1">3.1.-.-</ecNumber>
    </recommendedName>
</protein>
<accession>Q12L39</accession>
<sequence>MNTLLIIDGLNLVRRIHAAQPDENDINNVQQMTLLACTKMLKTHQPSHVIVVWDGDEESWRKKLYSDYKKGRKPMPEALKIALVGIRNTLSEAGIHSLEAESEADDVIATLATKMVENSGAAIIVSTDKGFSQLVKKNIQIWDHFKQLFLDISAHEKKLAVEQYQFLDFIALAGDSGNKIPGIAGIGPKSAADLLNKFRTLANIYNSLDNLGAKQAQKLAEGREMARISYKLGQLQCHMPLEINLKQFRVKK</sequence>
<comment type="function">
    <text evidence="1">Has flap endonuclease activity. During DNA replication, flap endonucleases cleave the 5'-overhanging flap structure that is generated by displacement synthesis when DNA polymerase encounters the 5'-end of a downstream Okazaki fragment.</text>
</comment>
<comment type="cofactor">
    <cofactor evidence="1">
        <name>Mg(2+)</name>
        <dbReference type="ChEBI" id="CHEBI:18420"/>
    </cofactor>
    <text evidence="1">Binds 2 Mg(2+) per subunit. Only one magnesium ion has a direct interaction with the protein, the other interactions are indirect.</text>
</comment>
<comment type="cofactor">
    <cofactor evidence="1">
        <name>K(+)</name>
        <dbReference type="ChEBI" id="CHEBI:29103"/>
    </cofactor>
    <text evidence="1">Binds 1 K(+) per subunit. The potassium ion strongly increases the affinity for DNA.</text>
</comment>
<comment type="similarity">
    <text evidence="1">Belongs to the Xni family.</text>
</comment>
<dbReference type="EC" id="3.1.-.-" evidence="1"/>
<dbReference type="EMBL" id="CP000302">
    <property type="protein sequence ID" value="ABE55837.1"/>
    <property type="molecule type" value="Genomic_DNA"/>
</dbReference>
<dbReference type="RefSeq" id="WP_011496988.1">
    <property type="nucleotide sequence ID" value="NC_007954.1"/>
</dbReference>
<dbReference type="SMR" id="Q12L39"/>
<dbReference type="STRING" id="318161.Sden_2558"/>
<dbReference type="KEGG" id="sdn:Sden_2558"/>
<dbReference type="eggNOG" id="COG0258">
    <property type="taxonomic scope" value="Bacteria"/>
</dbReference>
<dbReference type="HOGENOM" id="CLU_004675_1_2_6"/>
<dbReference type="OrthoDB" id="8070997at2"/>
<dbReference type="Proteomes" id="UP000001982">
    <property type="component" value="Chromosome"/>
</dbReference>
<dbReference type="GO" id="GO:0008409">
    <property type="term" value="F:5'-3' exonuclease activity"/>
    <property type="evidence" value="ECO:0007669"/>
    <property type="project" value="InterPro"/>
</dbReference>
<dbReference type="GO" id="GO:0017108">
    <property type="term" value="F:5'-flap endonuclease activity"/>
    <property type="evidence" value="ECO:0007669"/>
    <property type="project" value="UniProtKB-UniRule"/>
</dbReference>
<dbReference type="GO" id="GO:0003677">
    <property type="term" value="F:DNA binding"/>
    <property type="evidence" value="ECO:0007669"/>
    <property type="project" value="UniProtKB-UniRule"/>
</dbReference>
<dbReference type="GO" id="GO:0000287">
    <property type="term" value="F:magnesium ion binding"/>
    <property type="evidence" value="ECO:0007669"/>
    <property type="project" value="UniProtKB-UniRule"/>
</dbReference>
<dbReference type="GO" id="GO:0030955">
    <property type="term" value="F:potassium ion binding"/>
    <property type="evidence" value="ECO:0007669"/>
    <property type="project" value="UniProtKB-UniRule"/>
</dbReference>
<dbReference type="GO" id="GO:0033567">
    <property type="term" value="P:DNA replication, Okazaki fragment processing"/>
    <property type="evidence" value="ECO:0007669"/>
    <property type="project" value="UniProtKB-UniRule"/>
</dbReference>
<dbReference type="CDD" id="cd09898">
    <property type="entry name" value="H3TH_53EXO"/>
    <property type="match status" value="1"/>
</dbReference>
<dbReference type="CDD" id="cd09859">
    <property type="entry name" value="PIN_53EXO"/>
    <property type="match status" value="1"/>
</dbReference>
<dbReference type="FunFam" id="1.10.150.20:FF:000003">
    <property type="entry name" value="DNA polymerase I"/>
    <property type="match status" value="1"/>
</dbReference>
<dbReference type="Gene3D" id="1.10.150.20">
    <property type="entry name" value="5' to 3' exonuclease, C-terminal subdomain"/>
    <property type="match status" value="1"/>
</dbReference>
<dbReference type="Gene3D" id="3.40.50.1010">
    <property type="entry name" value="5'-nuclease"/>
    <property type="match status" value="1"/>
</dbReference>
<dbReference type="HAMAP" id="MF_01192">
    <property type="entry name" value="Xni"/>
    <property type="match status" value="1"/>
</dbReference>
<dbReference type="InterPro" id="IPR020046">
    <property type="entry name" value="5-3_exonucl_a-hlix_arch_N"/>
</dbReference>
<dbReference type="InterPro" id="IPR002421">
    <property type="entry name" value="5-3_exonuclease"/>
</dbReference>
<dbReference type="InterPro" id="IPR036279">
    <property type="entry name" value="5-3_exonuclease_C_sf"/>
</dbReference>
<dbReference type="InterPro" id="IPR020045">
    <property type="entry name" value="DNA_polI_H3TH"/>
</dbReference>
<dbReference type="InterPro" id="IPR038969">
    <property type="entry name" value="FEN"/>
</dbReference>
<dbReference type="InterPro" id="IPR008918">
    <property type="entry name" value="HhH2"/>
</dbReference>
<dbReference type="InterPro" id="IPR029060">
    <property type="entry name" value="PIN-like_dom_sf"/>
</dbReference>
<dbReference type="InterPro" id="IPR022895">
    <property type="entry name" value="Xni"/>
</dbReference>
<dbReference type="NCBIfam" id="NF007017">
    <property type="entry name" value="PRK09482.1"/>
    <property type="match status" value="1"/>
</dbReference>
<dbReference type="PANTHER" id="PTHR42646:SF2">
    <property type="entry name" value="5'-3' EXONUCLEASE FAMILY PROTEIN"/>
    <property type="match status" value="1"/>
</dbReference>
<dbReference type="PANTHER" id="PTHR42646">
    <property type="entry name" value="FLAP ENDONUCLEASE XNI"/>
    <property type="match status" value="1"/>
</dbReference>
<dbReference type="Pfam" id="PF01367">
    <property type="entry name" value="5_3_exonuc"/>
    <property type="match status" value="1"/>
</dbReference>
<dbReference type="Pfam" id="PF02739">
    <property type="entry name" value="5_3_exonuc_N"/>
    <property type="match status" value="1"/>
</dbReference>
<dbReference type="SMART" id="SM00475">
    <property type="entry name" value="53EXOc"/>
    <property type="match status" value="1"/>
</dbReference>
<dbReference type="SMART" id="SM00279">
    <property type="entry name" value="HhH2"/>
    <property type="match status" value="1"/>
</dbReference>
<dbReference type="SUPFAM" id="SSF47807">
    <property type="entry name" value="5' to 3' exonuclease, C-terminal subdomain"/>
    <property type="match status" value="1"/>
</dbReference>
<dbReference type="SUPFAM" id="SSF88723">
    <property type="entry name" value="PIN domain-like"/>
    <property type="match status" value="1"/>
</dbReference>
<reference key="1">
    <citation type="submission" date="2006-03" db="EMBL/GenBank/DDBJ databases">
        <title>Complete sequence of Shewanella denitrificans OS217.</title>
        <authorList>
            <consortium name="US DOE Joint Genome Institute"/>
            <person name="Copeland A."/>
            <person name="Lucas S."/>
            <person name="Lapidus A."/>
            <person name="Barry K."/>
            <person name="Detter J.C."/>
            <person name="Glavina del Rio T."/>
            <person name="Hammon N."/>
            <person name="Israni S."/>
            <person name="Dalin E."/>
            <person name="Tice H."/>
            <person name="Pitluck S."/>
            <person name="Brettin T."/>
            <person name="Bruce D."/>
            <person name="Han C."/>
            <person name="Tapia R."/>
            <person name="Gilna P."/>
            <person name="Kiss H."/>
            <person name="Schmutz J."/>
            <person name="Larimer F."/>
            <person name="Land M."/>
            <person name="Hauser L."/>
            <person name="Kyrpides N."/>
            <person name="Lykidis A."/>
            <person name="Richardson P."/>
        </authorList>
    </citation>
    <scope>NUCLEOTIDE SEQUENCE [LARGE SCALE GENOMIC DNA]</scope>
    <source>
        <strain>OS217 / ATCC BAA-1090 / DSM 15013</strain>
    </source>
</reference>
<organism>
    <name type="scientific">Shewanella denitrificans (strain OS217 / ATCC BAA-1090 / DSM 15013)</name>
    <dbReference type="NCBI Taxonomy" id="318161"/>
    <lineage>
        <taxon>Bacteria</taxon>
        <taxon>Pseudomonadati</taxon>
        <taxon>Pseudomonadota</taxon>
        <taxon>Gammaproteobacteria</taxon>
        <taxon>Alteromonadales</taxon>
        <taxon>Shewanellaceae</taxon>
        <taxon>Shewanella</taxon>
    </lineage>
</organism>
<name>XNI_SHEDO</name>
<keyword id="KW-0238">DNA-binding</keyword>
<keyword id="KW-0255">Endonuclease</keyword>
<keyword id="KW-0378">Hydrolase</keyword>
<keyword id="KW-0460">Magnesium</keyword>
<keyword id="KW-0479">Metal-binding</keyword>
<keyword id="KW-0540">Nuclease</keyword>
<keyword id="KW-0630">Potassium</keyword>
<keyword id="KW-1185">Reference proteome</keyword>
<evidence type="ECO:0000255" key="1">
    <source>
        <dbReference type="HAMAP-Rule" id="MF_01192"/>
    </source>
</evidence>
<feature type="chain" id="PRO_0000297874" description="Flap endonuclease Xni">
    <location>
        <begin position="1"/>
        <end position="252"/>
    </location>
</feature>
<feature type="domain" description="5'-3' exonuclease" evidence="1">
    <location>
        <begin position="162"/>
        <end position="251"/>
    </location>
</feature>
<feature type="region of interest" description="Interaction with DNA" evidence="1">
    <location>
        <begin position="185"/>
        <end position="190"/>
    </location>
</feature>
<feature type="binding site" evidence="1">
    <location>
        <position position="105"/>
    </location>
    <ligand>
        <name>Mg(2+)</name>
        <dbReference type="ChEBI" id="CHEBI:18420"/>
    </ligand>
</feature>
<feature type="binding site" evidence="1">
    <location>
        <position position="172"/>
    </location>
    <ligand>
        <name>K(+)</name>
        <dbReference type="ChEBI" id="CHEBI:29103"/>
    </ligand>
</feature>
<feature type="binding site" evidence="1">
    <location>
        <position position="173"/>
    </location>
    <ligand>
        <name>K(+)</name>
        <dbReference type="ChEBI" id="CHEBI:29103"/>
    </ligand>
</feature>
<feature type="binding site" evidence="1">
    <location>
        <position position="181"/>
    </location>
    <ligand>
        <name>K(+)</name>
        <dbReference type="ChEBI" id="CHEBI:29103"/>
    </ligand>
</feature>
<feature type="binding site" evidence="1">
    <location>
        <position position="183"/>
    </location>
    <ligand>
        <name>K(+)</name>
        <dbReference type="ChEBI" id="CHEBI:29103"/>
    </ligand>
</feature>
<feature type="binding site" evidence="1">
    <location>
        <position position="186"/>
    </location>
    <ligand>
        <name>K(+)</name>
        <dbReference type="ChEBI" id="CHEBI:29103"/>
    </ligand>
</feature>
<gene>
    <name evidence="1" type="primary">xni</name>
    <name evidence="1" type="synonym">ygdG</name>
    <name type="ordered locus">Sden_2558</name>
</gene>
<proteinExistence type="inferred from homology"/>